<sequence length="400" mass="43336">MRKLTILGATGSIGSSTLSVAKQNSDQFEVVALGAGTNVDKMLELCLEWKPKYVAMATQPAADELKELLSAHAINAEVFSGEDGLCHIAQLDEVDTVMAAIVGAAGLLPTMSAVKAGKRILLANKEALVMSGQLFIDAVEKYGAELLPVDSEHNAIFQCLPQSIQTNLGRCDLEEHGVSSILLTGSGGPFRYTDVSELEAVTPEMAIAHPNWSMGPKISVDSATMMNKGLEYIEARWLFNASKDQLKVVIHPQSVIHSMVQYKDGSVLAQMGLPDMRTPIACTMSYPKRVDAGVEPLDFTKVGEFTFIAPDFARYPCLKLAIDACYLGQHATTGLNAANEQAVAAFLANKIKFTDIARINEAVLHKVCANFQNLELDSLESLIDLDRMARRYADEAINKV</sequence>
<name>DXR_ALIF1</name>
<evidence type="ECO:0000255" key="1">
    <source>
        <dbReference type="HAMAP-Rule" id="MF_00183"/>
    </source>
</evidence>
<reference key="1">
    <citation type="journal article" date="2005" name="Proc. Natl. Acad. Sci. U.S.A.">
        <title>Complete genome sequence of Vibrio fischeri: a symbiotic bacterium with pathogenic congeners.</title>
        <authorList>
            <person name="Ruby E.G."/>
            <person name="Urbanowski M."/>
            <person name="Campbell J."/>
            <person name="Dunn A."/>
            <person name="Faini M."/>
            <person name="Gunsalus R."/>
            <person name="Lostroh P."/>
            <person name="Lupp C."/>
            <person name="McCann J."/>
            <person name="Millikan D."/>
            <person name="Schaefer A."/>
            <person name="Stabb E."/>
            <person name="Stevens A."/>
            <person name="Visick K."/>
            <person name="Whistler C."/>
            <person name="Greenberg E.P."/>
        </authorList>
    </citation>
    <scope>NUCLEOTIDE SEQUENCE [LARGE SCALE GENOMIC DNA]</scope>
    <source>
        <strain>ATCC 700601 / ES114</strain>
    </source>
</reference>
<keyword id="KW-0414">Isoprene biosynthesis</keyword>
<keyword id="KW-0464">Manganese</keyword>
<keyword id="KW-0479">Metal-binding</keyword>
<keyword id="KW-0521">NADP</keyword>
<keyword id="KW-0560">Oxidoreductase</keyword>
<keyword id="KW-1185">Reference proteome</keyword>
<comment type="function">
    <text evidence="1">Catalyzes the NADPH-dependent rearrangement and reduction of 1-deoxy-D-xylulose-5-phosphate (DXP) to 2-C-methyl-D-erythritol 4-phosphate (MEP).</text>
</comment>
<comment type="catalytic activity">
    <reaction evidence="1">
        <text>2-C-methyl-D-erythritol 4-phosphate + NADP(+) = 1-deoxy-D-xylulose 5-phosphate + NADPH + H(+)</text>
        <dbReference type="Rhea" id="RHEA:13717"/>
        <dbReference type="ChEBI" id="CHEBI:15378"/>
        <dbReference type="ChEBI" id="CHEBI:57783"/>
        <dbReference type="ChEBI" id="CHEBI:57792"/>
        <dbReference type="ChEBI" id="CHEBI:58262"/>
        <dbReference type="ChEBI" id="CHEBI:58349"/>
        <dbReference type="EC" id="1.1.1.267"/>
    </reaction>
    <physiologicalReaction direction="right-to-left" evidence="1">
        <dbReference type="Rhea" id="RHEA:13719"/>
    </physiologicalReaction>
</comment>
<comment type="cofactor">
    <cofactor evidence="1">
        <name>Mg(2+)</name>
        <dbReference type="ChEBI" id="CHEBI:18420"/>
    </cofactor>
    <cofactor evidence="1">
        <name>Mn(2+)</name>
        <dbReference type="ChEBI" id="CHEBI:29035"/>
    </cofactor>
</comment>
<comment type="pathway">
    <text evidence="1">Isoprenoid biosynthesis; isopentenyl diphosphate biosynthesis via DXP pathway; isopentenyl diphosphate from 1-deoxy-D-xylulose 5-phosphate: step 1/6.</text>
</comment>
<comment type="similarity">
    <text evidence="1">Belongs to the DXR family.</text>
</comment>
<accession>Q5E3E5</accession>
<gene>
    <name evidence="1" type="primary">dxr</name>
    <name type="ordered locus">VF_1956</name>
</gene>
<protein>
    <recommendedName>
        <fullName evidence="1">1-deoxy-D-xylulose 5-phosphate reductoisomerase</fullName>
        <shortName evidence="1">DXP reductoisomerase</shortName>
        <ecNumber evidence="1">1.1.1.267</ecNumber>
    </recommendedName>
    <alternativeName>
        <fullName evidence="1">1-deoxyxylulose-5-phosphate reductoisomerase</fullName>
    </alternativeName>
    <alternativeName>
        <fullName evidence="1">2-C-methyl-D-erythritol 4-phosphate synthase</fullName>
    </alternativeName>
</protein>
<organism>
    <name type="scientific">Aliivibrio fischeri (strain ATCC 700601 / ES114)</name>
    <name type="common">Vibrio fischeri</name>
    <dbReference type="NCBI Taxonomy" id="312309"/>
    <lineage>
        <taxon>Bacteria</taxon>
        <taxon>Pseudomonadati</taxon>
        <taxon>Pseudomonadota</taxon>
        <taxon>Gammaproteobacteria</taxon>
        <taxon>Vibrionales</taxon>
        <taxon>Vibrionaceae</taxon>
        <taxon>Aliivibrio</taxon>
    </lineage>
</organism>
<proteinExistence type="inferred from homology"/>
<feature type="chain" id="PRO_0000163731" description="1-deoxy-D-xylulose 5-phosphate reductoisomerase">
    <location>
        <begin position="1"/>
        <end position="400"/>
    </location>
</feature>
<feature type="binding site" evidence="1">
    <location>
        <position position="10"/>
    </location>
    <ligand>
        <name>NADPH</name>
        <dbReference type="ChEBI" id="CHEBI:57783"/>
    </ligand>
</feature>
<feature type="binding site" evidence="1">
    <location>
        <position position="11"/>
    </location>
    <ligand>
        <name>NADPH</name>
        <dbReference type="ChEBI" id="CHEBI:57783"/>
    </ligand>
</feature>
<feature type="binding site" evidence="1">
    <location>
        <position position="12"/>
    </location>
    <ligand>
        <name>NADPH</name>
        <dbReference type="ChEBI" id="CHEBI:57783"/>
    </ligand>
</feature>
<feature type="binding site" evidence="1">
    <location>
        <position position="13"/>
    </location>
    <ligand>
        <name>NADPH</name>
        <dbReference type="ChEBI" id="CHEBI:57783"/>
    </ligand>
</feature>
<feature type="binding site" evidence="1">
    <location>
        <position position="36"/>
    </location>
    <ligand>
        <name>NADPH</name>
        <dbReference type="ChEBI" id="CHEBI:57783"/>
    </ligand>
</feature>
<feature type="binding site" evidence="1">
    <location>
        <position position="38"/>
    </location>
    <ligand>
        <name>NADPH</name>
        <dbReference type="ChEBI" id="CHEBI:57783"/>
    </ligand>
</feature>
<feature type="binding site" evidence="1">
    <location>
        <position position="124"/>
    </location>
    <ligand>
        <name>NADPH</name>
        <dbReference type="ChEBI" id="CHEBI:57783"/>
    </ligand>
</feature>
<feature type="binding site" evidence="1">
    <location>
        <position position="125"/>
    </location>
    <ligand>
        <name>1-deoxy-D-xylulose 5-phosphate</name>
        <dbReference type="ChEBI" id="CHEBI:57792"/>
    </ligand>
</feature>
<feature type="binding site" evidence="1">
    <location>
        <position position="126"/>
    </location>
    <ligand>
        <name>NADPH</name>
        <dbReference type="ChEBI" id="CHEBI:57783"/>
    </ligand>
</feature>
<feature type="binding site" evidence="1">
    <location>
        <position position="150"/>
    </location>
    <ligand>
        <name>Mn(2+)</name>
        <dbReference type="ChEBI" id="CHEBI:29035"/>
    </ligand>
</feature>
<feature type="binding site" evidence="1">
    <location>
        <position position="151"/>
    </location>
    <ligand>
        <name>1-deoxy-D-xylulose 5-phosphate</name>
        <dbReference type="ChEBI" id="CHEBI:57792"/>
    </ligand>
</feature>
<feature type="binding site" evidence="1">
    <location>
        <position position="152"/>
    </location>
    <ligand>
        <name>1-deoxy-D-xylulose 5-phosphate</name>
        <dbReference type="ChEBI" id="CHEBI:57792"/>
    </ligand>
</feature>
<feature type="binding site" evidence="1">
    <location>
        <position position="152"/>
    </location>
    <ligand>
        <name>Mn(2+)</name>
        <dbReference type="ChEBI" id="CHEBI:29035"/>
    </ligand>
</feature>
<feature type="binding site" evidence="1">
    <location>
        <position position="186"/>
    </location>
    <ligand>
        <name>1-deoxy-D-xylulose 5-phosphate</name>
        <dbReference type="ChEBI" id="CHEBI:57792"/>
    </ligand>
</feature>
<feature type="binding site" evidence="1">
    <location>
        <position position="209"/>
    </location>
    <ligand>
        <name>1-deoxy-D-xylulose 5-phosphate</name>
        <dbReference type="ChEBI" id="CHEBI:57792"/>
    </ligand>
</feature>
<feature type="binding site" evidence="1">
    <location>
        <position position="215"/>
    </location>
    <ligand>
        <name>NADPH</name>
        <dbReference type="ChEBI" id="CHEBI:57783"/>
    </ligand>
</feature>
<feature type="binding site" evidence="1">
    <location>
        <position position="222"/>
    </location>
    <ligand>
        <name>1-deoxy-D-xylulose 5-phosphate</name>
        <dbReference type="ChEBI" id="CHEBI:57792"/>
    </ligand>
</feature>
<feature type="binding site" evidence="1">
    <location>
        <position position="227"/>
    </location>
    <ligand>
        <name>1-deoxy-D-xylulose 5-phosphate</name>
        <dbReference type="ChEBI" id="CHEBI:57792"/>
    </ligand>
</feature>
<feature type="binding site" evidence="1">
    <location>
        <position position="228"/>
    </location>
    <ligand>
        <name>1-deoxy-D-xylulose 5-phosphate</name>
        <dbReference type="ChEBI" id="CHEBI:57792"/>
    </ligand>
</feature>
<feature type="binding site" evidence="1">
    <location>
        <position position="231"/>
    </location>
    <ligand>
        <name>1-deoxy-D-xylulose 5-phosphate</name>
        <dbReference type="ChEBI" id="CHEBI:57792"/>
    </ligand>
</feature>
<feature type="binding site" evidence="1">
    <location>
        <position position="231"/>
    </location>
    <ligand>
        <name>Mn(2+)</name>
        <dbReference type="ChEBI" id="CHEBI:29035"/>
    </ligand>
</feature>
<dbReference type="EC" id="1.1.1.267" evidence="1"/>
<dbReference type="EMBL" id="CP000020">
    <property type="protein sequence ID" value="AAW86451.1"/>
    <property type="molecule type" value="Genomic_DNA"/>
</dbReference>
<dbReference type="RefSeq" id="WP_011262430.1">
    <property type="nucleotide sequence ID" value="NC_006840.2"/>
</dbReference>
<dbReference type="RefSeq" id="YP_205339.1">
    <property type="nucleotide sequence ID" value="NC_006840.2"/>
</dbReference>
<dbReference type="SMR" id="Q5E3E5"/>
<dbReference type="STRING" id="312309.VF_1956"/>
<dbReference type="EnsemblBacteria" id="AAW86451">
    <property type="protein sequence ID" value="AAW86451"/>
    <property type="gene ID" value="VF_1956"/>
</dbReference>
<dbReference type="GeneID" id="54164652"/>
<dbReference type="KEGG" id="vfi:VF_1956"/>
<dbReference type="PATRIC" id="fig|312309.11.peg.1983"/>
<dbReference type="eggNOG" id="COG0743">
    <property type="taxonomic scope" value="Bacteria"/>
</dbReference>
<dbReference type="HOGENOM" id="CLU_035714_4_0_6"/>
<dbReference type="OrthoDB" id="9806546at2"/>
<dbReference type="UniPathway" id="UPA00056">
    <property type="reaction ID" value="UER00092"/>
</dbReference>
<dbReference type="Proteomes" id="UP000000537">
    <property type="component" value="Chromosome I"/>
</dbReference>
<dbReference type="GO" id="GO:0030604">
    <property type="term" value="F:1-deoxy-D-xylulose-5-phosphate reductoisomerase activity"/>
    <property type="evidence" value="ECO:0007669"/>
    <property type="project" value="UniProtKB-UniRule"/>
</dbReference>
<dbReference type="GO" id="GO:0030145">
    <property type="term" value="F:manganese ion binding"/>
    <property type="evidence" value="ECO:0007669"/>
    <property type="project" value="TreeGrafter"/>
</dbReference>
<dbReference type="GO" id="GO:0070402">
    <property type="term" value="F:NADPH binding"/>
    <property type="evidence" value="ECO:0007669"/>
    <property type="project" value="InterPro"/>
</dbReference>
<dbReference type="GO" id="GO:0051484">
    <property type="term" value="P:isopentenyl diphosphate biosynthetic process, methylerythritol 4-phosphate pathway involved in terpenoid biosynthetic process"/>
    <property type="evidence" value="ECO:0007669"/>
    <property type="project" value="TreeGrafter"/>
</dbReference>
<dbReference type="FunFam" id="1.10.1740.10:FF:000004">
    <property type="entry name" value="1-deoxy-D-xylulose 5-phosphate reductoisomerase"/>
    <property type="match status" value="1"/>
</dbReference>
<dbReference type="FunFam" id="3.40.50.720:FF:000045">
    <property type="entry name" value="1-deoxy-D-xylulose 5-phosphate reductoisomerase"/>
    <property type="match status" value="1"/>
</dbReference>
<dbReference type="Gene3D" id="1.10.1740.10">
    <property type="match status" value="1"/>
</dbReference>
<dbReference type="Gene3D" id="3.40.50.720">
    <property type="entry name" value="NAD(P)-binding Rossmann-like Domain"/>
    <property type="match status" value="1"/>
</dbReference>
<dbReference type="HAMAP" id="MF_00183">
    <property type="entry name" value="DXP_reductoisom"/>
    <property type="match status" value="1"/>
</dbReference>
<dbReference type="InterPro" id="IPR003821">
    <property type="entry name" value="DXP_reductoisomerase"/>
</dbReference>
<dbReference type="InterPro" id="IPR013644">
    <property type="entry name" value="DXP_reductoisomerase_C"/>
</dbReference>
<dbReference type="InterPro" id="IPR013512">
    <property type="entry name" value="DXP_reductoisomerase_N"/>
</dbReference>
<dbReference type="InterPro" id="IPR026877">
    <property type="entry name" value="DXPR_C"/>
</dbReference>
<dbReference type="InterPro" id="IPR036169">
    <property type="entry name" value="DXPR_C_sf"/>
</dbReference>
<dbReference type="InterPro" id="IPR036291">
    <property type="entry name" value="NAD(P)-bd_dom_sf"/>
</dbReference>
<dbReference type="NCBIfam" id="TIGR00243">
    <property type="entry name" value="Dxr"/>
    <property type="match status" value="1"/>
</dbReference>
<dbReference type="NCBIfam" id="NF003938">
    <property type="entry name" value="PRK05447.1-1"/>
    <property type="match status" value="1"/>
</dbReference>
<dbReference type="NCBIfam" id="NF009114">
    <property type="entry name" value="PRK12464.1"/>
    <property type="match status" value="1"/>
</dbReference>
<dbReference type="PANTHER" id="PTHR30525">
    <property type="entry name" value="1-DEOXY-D-XYLULOSE 5-PHOSPHATE REDUCTOISOMERASE"/>
    <property type="match status" value="1"/>
</dbReference>
<dbReference type="PANTHER" id="PTHR30525:SF0">
    <property type="entry name" value="1-DEOXY-D-XYLULOSE 5-PHOSPHATE REDUCTOISOMERASE, CHLOROPLASTIC"/>
    <property type="match status" value="1"/>
</dbReference>
<dbReference type="Pfam" id="PF08436">
    <property type="entry name" value="DXP_redisom_C"/>
    <property type="match status" value="1"/>
</dbReference>
<dbReference type="Pfam" id="PF02670">
    <property type="entry name" value="DXP_reductoisom"/>
    <property type="match status" value="1"/>
</dbReference>
<dbReference type="Pfam" id="PF13288">
    <property type="entry name" value="DXPR_C"/>
    <property type="match status" value="1"/>
</dbReference>
<dbReference type="PIRSF" id="PIRSF006205">
    <property type="entry name" value="Dxp_reductismrs"/>
    <property type="match status" value="1"/>
</dbReference>
<dbReference type="SUPFAM" id="SSF69055">
    <property type="entry name" value="1-deoxy-D-xylulose-5-phosphate reductoisomerase, C-terminal domain"/>
    <property type="match status" value="1"/>
</dbReference>
<dbReference type="SUPFAM" id="SSF55347">
    <property type="entry name" value="Glyceraldehyde-3-phosphate dehydrogenase-like, C-terminal domain"/>
    <property type="match status" value="1"/>
</dbReference>
<dbReference type="SUPFAM" id="SSF51735">
    <property type="entry name" value="NAD(P)-binding Rossmann-fold domains"/>
    <property type="match status" value="1"/>
</dbReference>